<gene>
    <name type="primary">ASB3</name>
</gene>
<protein>
    <recommendedName>
        <fullName>Ankyrin repeat and SOCS box protein 3</fullName>
        <shortName>ASB-3</shortName>
    </recommendedName>
</protein>
<name>ASB3_HUMAN</name>
<accession>Q9Y575</accession>
<accession>B3KPA3</accession>
<accession>D6W5B4</accession>
<accession>D6W5B5</accession>
<accession>G8JLA9</accession>
<accession>Q2TAI4</accession>
<accession>Q53TN0</accession>
<accession>Q53TN8</accession>
<accession>Q9NVZ2</accession>
<dbReference type="EMBL" id="AF156778">
    <property type="protein sequence ID" value="AAD41895.1"/>
    <property type="molecule type" value="mRNA"/>
</dbReference>
<dbReference type="EMBL" id="AK000985">
    <property type="protein sequence ID" value="BAA91455.1"/>
    <property type="molecule type" value="mRNA"/>
</dbReference>
<dbReference type="EMBL" id="AK001283">
    <property type="protein sequence ID" value="BAA91599.1"/>
    <property type="molecule type" value="mRNA"/>
</dbReference>
<dbReference type="EMBL" id="AK056069">
    <property type="protein sequence ID" value="BAG51615.1"/>
    <property type="molecule type" value="mRNA"/>
</dbReference>
<dbReference type="EMBL" id="AC007883">
    <property type="protein sequence ID" value="AAY24350.1"/>
    <property type="molecule type" value="Genomic_DNA"/>
</dbReference>
<dbReference type="EMBL" id="AC008064">
    <property type="protein sequence ID" value="AAX93180.1"/>
    <property type="molecule type" value="Genomic_DNA"/>
</dbReference>
<dbReference type="EMBL" id="AC008068">
    <property type="status" value="NOT_ANNOTATED_CDS"/>
    <property type="molecule type" value="Genomic_DNA"/>
</dbReference>
<dbReference type="EMBL" id="AC069157">
    <property type="status" value="NOT_ANNOTATED_CDS"/>
    <property type="molecule type" value="Genomic_DNA"/>
</dbReference>
<dbReference type="EMBL" id="CH471053">
    <property type="protein sequence ID" value="EAX00167.1"/>
    <property type="molecule type" value="Genomic_DNA"/>
</dbReference>
<dbReference type="EMBL" id="CH471053">
    <property type="protein sequence ID" value="EAX00168.1"/>
    <property type="molecule type" value="Genomic_DNA"/>
</dbReference>
<dbReference type="EMBL" id="CH471053">
    <property type="protein sequence ID" value="EAX00169.1"/>
    <property type="molecule type" value="Genomic_DNA"/>
</dbReference>
<dbReference type="EMBL" id="CH471053">
    <property type="protein sequence ID" value="EAX00170.1"/>
    <property type="molecule type" value="Genomic_DNA"/>
</dbReference>
<dbReference type="EMBL" id="BC006488">
    <property type="protein sequence ID" value="AAH06488.1"/>
    <property type="molecule type" value="mRNA"/>
</dbReference>
<dbReference type="EMBL" id="BC009569">
    <property type="protein sequence ID" value="AAH09569.1"/>
    <property type="molecule type" value="mRNA"/>
</dbReference>
<dbReference type="EMBL" id="BC110915">
    <property type="protein sequence ID" value="AAI10916.1"/>
    <property type="status" value="ALT_INIT"/>
    <property type="molecule type" value="mRNA"/>
</dbReference>
<dbReference type="CCDS" id="CCDS1846.1">
    <molecule id="Q9Y575-1"/>
</dbReference>
<dbReference type="CCDS" id="CCDS1847.1">
    <molecule id="Q9Y575-2"/>
</dbReference>
<dbReference type="RefSeq" id="NP_001157637.1">
    <molecule id="Q9Y575-3"/>
    <property type="nucleotide sequence ID" value="NM_001164165.1"/>
</dbReference>
<dbReference type="RefSeq" id="NP_001188894.1">
    <molecule id="Q9Y575-2"/>
    <property type="nucleotide sequence ID" value="NM_001201965.2"/>
</dbReference>
<dbReference type="RefSeq" id="NP_057199.1">
    <molecule id="Q9Y575-1"/>
    <property type="nucleotide sequence ID" value="NM_016115.5"/>
</dbReference>
<dbReference type="RefSeq" id="NP_665862.1">
    <molecule id="Q9Y575-2"/>
    <property type="nucleotide sequence ID" value="NM_145863.3"/>
</dbReference>
<dbReference type="SMR" id="Q9Y575"/>
<dbReference type="BioGRID" id="119317">
    <property type="interactions" value="85"/>
</dbReference>
<dbReference type="BioGRID" id="950460">
    <property type="interactions" value="1"/>
</dbReference>
<dbReference type="FunCoup" id="Q9Y575">
    <property type="interactions" value="1352"/>
</dbReference>
<dbReference type="IntAct" id="Q9Y575">
    <property type="interactions" value="82"/>
</dbReference>
<dbReference type="MINT" id="Q9Y575"/>
<dbReference type="STRING" id="9606.ENSP00000499751"/>
<dbReference type="iPTMnet" id="Q9Y575"/>
<dbReference type="PhosphoSitePlus" id="Q9Y575"/>
<dbReference type="SwissPalm" id="Q9Y575"/>
<dbReference type="BioMuta" id="ASB3"/>
<dbReference type="DMDM" id="20532004"/>
<dbReference type="jPOST" id="Q9Y575"/>
<dbReference type="MassIVE" id="Q9Y575"/>
<dbReference type="PaxDb" id="9606-ENSP00000263634"/>
<dbReference type="PeptideAtlas" id="Q9Y575"/>
<dbReference type="ProteomicsDB" id="34171"/>
<dbReference type="ProteomicsDB" id="86306">
    <molecule id="Q9Y575-1"/>
</dbReference>
<dbReference type="ProteomicsDB" id="86307">
    <molecule id="Q9Y575-2"/>
</dbReference>
<dbReference type="Pumba" id="Q9Y575"/>
<dbReference type="Antibodypedia" id="1141">
    <property type="antibodies" value="162 antibodies from 23 providers"/>
</dbReference>
<dbReference type="DNASU" id="51130"/>
<dbReference type="Ensembl" id="ENST00000263634.8">
    <molecule id="Q9Y575-1"/>
    <property type="protein sequence ID" value="ENSP00000263634.2"/>
    <property type="gene ID" value="ENSG00000115239.24"/>
</dbReference>
<dbReference type="Ensembl" id="ENST00000394717.3">
    <molecule id="Q9Y575-2"/>
    <property type="protein sequence ID" value="ENSP00000378206.2"/>
    <property type="gene ID" value="ENSG00000115239.24"/>
</dbReference>
<dbReference type="Ensembl" id="ENST00000406625.6">
    <molecule id="Q9Y575-1"/>
    <property type="protein sequence ID" value="ENSP00000385085.4"/>
    <property type="gene ID" value="ENSG00000115239.24"/>
</dbReference>
<dbReference type="Ensembl" id="ENST00000406687.5">
    <molecule id="Q9Y575-2"/>
    <property type="protein sequence ID" value="ENSP00000384728.1"/>
    <property type="gene ID" value="ENSG00000115239.24"/>
</dbReference>
<dbReference type="GeneID" id="100302652"/>
<dbReference type="GeneID" id="51130"/>
<dbReference type="KEGG" id="hsa:100302652"/>
<dbReference type="KEGG" id="hsa:51130"/>
<dbReference type="MANE-Select" id="ENST00000263634.8">
    <property type="protein sequence ID" value="ENSP00000263634.2"/>
    <property type="RefSeq nucleotide sequence ID" value="NM_016115.5"/>
    <property type="RefSeq protein sequence ID" value="NP_057199.1"/>
</dbReference>
<dbReference type="UCSC" id="uc002rxg.3">
    <molecule id="Q9Y575-1"/>
    <property type="organism name" value="human"/>
</dbReference>
<dbReference type="AGR" id="HGNC:16013"/>
<dbReference type="AGR" id="HGNC:40043"/>
<dbReference type="CTD" id="100302652"/>
<dbReference type="CTD" id="51130"/>
<dbReference type="DisGeNET" id="100302652"/>
<dbReference type="DisGeNET" id="51130"/>
<dbReference type="GeneCards" id="ASB3"/>
<dbReference type="HGNC" id="HGNC:16013">
    <property type="gene designation" value="ASB3"/>
</dbReference>
<dbReference type="HPA" id="ENSG00000115239">
    <property type="expression patterns" value="Low tissue specificity"/>
</dbReference>
<dbReference type="MIM" id="605760">
    <property type="type" value="gene"/>
</dbReference>
<dbReference type="neXtProt" id="NX_Q9Y575"/>
<dbReference type="OpenTargets" id="ENSG00000115239"/>
<dbReference type="PharmGKB" id="PA25031"/>
<dbReference type="VEuPathDB" id="HostDB:ENSG00000115239"/>
<dbReference type="eggNOG" id="KOG0504">
    <property type="taxonomic scope" value="Eukaryota"/>
</dbReference>
<dbReference type="GeneTree" id="ENSGT00940000159080"/>
<dbReference type="HOGENOM" id="CLU_000134_3_0_1"/>
<dbReference type="InParanoid" id="Q9Y575"/>
<dbReference type="OMA" id="DCRSPMC"/>
<dbReference type="OrthoDB" id="194358at2759"/>
<dbReference type="PAN-GO" id="Q9Y575">
    <property type="GO annotations" value="3 GO annotations based on evolutionary models"/>
</dbReference>
<dbReference type="PhylomeDB" id="Q9Y575"/>
<dbReference type="TreeFam" id="TF315127"/>
<dbReference type="PathwayCommons" id="Q9Y575"/>
<dbReference type="Reactome" id="R-HSA-8951664">
    <property type="pathway name" value="Neddylation"/>
</dbReference>
<dbReference type="Reactome" id="R-HSA-983168">
    <property type="pathway name" value="Antigen processing: Ubiquitination &amp; Proteasome degradation"/>
</dbReference>
<dbReference type="SignaLink" id="Q9Y575"/>
<dbReference type="SIGNOR" id="Q9Y575"/>
<dbReference type="UniPathway" id="UPA00143"/>
<dbReference type="BioGRID-ORCS" id="100302652">
    <property type="hits" value="8 hits in 1013 CRISPR screens"/>
</dbReference>
<dbReference type="BioGRID-ORCS" id="51130">
    <property type="hits" value="30 hits in 1099 CRISPR screens"/>
</dbReference>
<dbReference type="ChiTaRS" id="ASB3">
    <property type="organism name" value="human"/>
</dbReference>
<dbReference type="GeneWiki" id="ASB3"/>
<dbReference type="Pharos" id="Q9Y575">
    <property type="development level" value="Tbio"/>
</dbReference>
<dbReference type="PRO" id="PR:Q9Y575"/>
<dbReference type="Proteomes" id="UP000005640">
    <property type="component" value="Chromosome 2"/>
</dbReference>
<dbReference type="RNAct" id="Q9Y575">
    <property type="molecule type" value="protein"/>
</dbReference>
<dbReference type="Bgee" id="ENSG00000115239">
    <property type="expression patterns" value="Expressed in secondary oocyte and 184 other cell types or tissues"/>
</dbReference>
<dbReference type="ExpressionAtlas" id="Q9Y575">
    <property type="expression patterns" value="baseline and differential"/>
</dbReference>
<dbReference type="GO" id="GO:0005829">
    <property type="term" value="C:cytosol"/>
    <property type="evidence" value="ECO:0000304"/>
    <property type="project" value="Reactome"/>
</dbReference>
<dbReference type="GO" id="GO:0035556">
    <property type="term" value="P:intracellular signal transduction"/>
    <property type="evidence" value="ECO:0007669"/>
    <property type="project" value="InterPro"/>
</dbReference>
<dbReference type="GO" id="GO:0016567">
    <property type="term" value="P:protein ubiquitination"/>
    <property type="evidence" value="ECO:0007669"/>
    <property type="project" value="UniProtKB-UniPathway"/>
</dbReference>
<dbReference type="CDD" id="cd03722">
    <property type="entry name" value="SOCS_ASB3"/>
    <property type="match status" value="1"/>
</dbReference>
<dbReference type="FunFam" id="1.10.750.20:FF:000001">
    <property type="entry name" value="Ankyrin repeat and SOCS box containing 1"/>
    <property type="match status" value="1"/>
</dbReference>
<dbReference type="FunFam" id="1.25.40.20:FF:000171">
    <property type="entry name" value="Ankyrin repeat and SOCS box containing 3"/>
    <property type="match status" value="1"/>
</dbReference>
<dbReference type="FunFam" id="1.25.40.20:FF:000223">
    <property type="entry name" value="ankyrin repeat and SOCS box protein 3 isoform X1"/>
    <property type="match status" value="1"/>
</dbReference>
<dbReference type="Gene3D" id="1.25.40.20">
    <property type="entry name" value="Ankyrin repeat-containing domain"/>
    <property type="match status" value="2"/>
</dbReference>
<dbReference type="Gene3D" id="1.10.750.20">
    <property type="entry name" value="SOCS box"/>
    <property type="match status" value="1"/>
</dbReference>
<dbReference type="InterPro" id="IPR002110">
    <property type="entry name" value="Ankyrin_rpt"/>
</dbReference>
<dbReference type="InterPro" id="IPR036770">
    <property type="entry name" value="Ankyrin_rpt-contain_sf"/>
</dbReference>
<dbReference type="InterPro" id="IPR037329">
    <property type="entry name" value="ASB3_SOCS"/>
</dbReference>
<dbReference type="InterPro" id="IPR001496">
    <property type="entry name" value="SOCS_box"/>
</dbReference>
<dbReference type="InterPro" id="IPR036036">
    <property type="entry name" value="SOCS_box-like_dom_sf"/>
</dbReference>
<dbReference type="PANTHER" id="PTHR24173">
    <property type="entry name" value="ANKYRIN REPEAT CONTAINING"/>
    <property type="match status" value="1"/>
</dbReference>
<dbReference type="PANTHER" id="PTHR24173:SF74">
    <property type="entry name" value="ANKYRIN REPEAT DOMAIN-CONTAINING PROTEIN 16"/>
    <property type="match status" value="1"/>
</dbReference>
<dbReference type="Pfam" id="PF00023">
    <property type="entry name" value="Ank"/>
    <property type="match status" value="1"/>
</dbReference>
<dbReference type="Pfam" id="PF12796">
    <property type="entry name" value="Ank_2"/>
    <property type="match status" value="3"/>
</dbReference>
<dbReference type="Pfam" id="PF07525">
    <property type="entry name" value="SOCS_box"/>
    <property type="match status" value="1"/>
</dbReference>
<dbReference type="PRINTS" id="PR01415">
    <property type="entry name" value="ANKYRIN"/>
</dbReference>
<dbReference type="SMART" id="SM00248">
    <property type="entry name" value="ANK"/>
    <property type="match status" value="10"/>
</dbReference>
<dbReference type="SMART" id="SM00969">
    <property type="entry name" value="SOCS_box"/>
    <property type="match status" value="1"/>
</dbReference>
<dbReference type="SUPFAM" id="SSF48403">
    <property type="entry name" value="Ankyrin repeat"/>
    <property type="match status" value="2"/>
</dbReference>
<dbReference type="SUPFAM" id="SSF158235">
    <property type="entry name" value="SOCS box-like"/>
    <property type="match status" value="1"/>
</dbReference>
<dbReference type="PROSITE" id="PS50297">
    <property type="entry name" value="ANK_REP_REGION"/>
    <property type="match status" value="1"/>
</dbReference>
<dbReference type="PROSITE" id="PS50088">
    <property type="entry name" value="ANK_REPEAT"/>
    <property type="match status" value="6"/>
</dbReference>
<dbReference type="PROSITE" id="PS50225">
    <property type="entry name" value="SOCS"/>
    <property type="match status" value="1"/>
</dbReference>
<sequence>MDFTEAYADTCSTVGLAAREGNVKVLRKLLKKGRSVDVADNRGWMPIHEAAYHNSVECLQMLINADSSENYIKMKTFEGFCALHLAASQGHWKIVQILLEAGADPNATTLEETTPLFLAVENGQIDVLRLLLQHGANVNGSHSMCGWNSLHQASFQENAEIIKLLLRKGANKECQDDFGITPLFVAAQYGKLESLSILISSGANVNCQALDKATPLFIAAQEGHTKCVELLLSSGADPDLYCNEDSWQLPIHAAAQMGHTKILDLLIPLTNRACDTGLNKVSPVYSAVFGGHEDCLEILLRNGYSPDAQACLVFGFSSPVCMAFQKDCEFFGIVNILLKYGAQINELHLAYCLKYEKFSIFRYFLRKGCSLGPWNHIYEFVNHAIKAQAKYKEWLPHLLVAGFDPLILLCNSWIDSVSIDTLIFTLEFTNWKTLAPAVERMLSARASNAWILQQHIATVPSLTHLCRLEIRSSLKSERLRSDSYISQLPLPRSLHNYLLYEDVLRMYEVPELAAIQDG</sequence>
<evidence type="ECO:0000250" key="1"/>
<evidence type="ECO:0000255" key="2">
    <source>
        <dbReference type="PROSITE-ProRule" id="PRU00194"/>
    </source>
</evidence>
<evidence type="ECO:0000269" key="3">
    <source>
    </source>
</evidence>
<evidence type="ECO:0000269" key="4">
    <source>
    </source>
</evidence>
<evidence type="ECO:0000269" key="5">
    <source>
    </source>
</evidence>
<evidence type="ECO:0000303" key="6">
    <source>
    </source>
</evidence>
<evidence type="ECO:0000303" key="7">
    <source>
    </source>
</evidence>
<evidence type="ECO:0000305" key="8"/>
<organism>
    <name type="scientific">Homo sapiens</name>
    <name type="common">Human</name>
    <dbReference type="NCBI Taxonomy" id="9606"/>
    <lineage>
        <taxon>Eukaryota</taxon>
        <taxon>Metazoa</taxon>
        <taxon>Chordata</taxon>
        <taxon>Craniata</taxon>
        <taxon>Vertebrata</taxon>
        <taxon>Euteleostomi</taxon>
        <taxon>Mammalia</taxon>
        <taxon>Eutheria</taxon>
        <taxon>Euarchontoglires</taxon>
        <taxon>Primates</taxon>
        <taxon>Haplorrhini</taxon>
        <taxon>Catarrhini</taxon>
        <taxon>Hominidae</taxon>
        <taxon>Homo</taxon>
    </lineage>
</organism>
<proteinExistence type="evidence at protein level"/>
<feature type="chain" id="PRO_0000066926" description="Ankyrin repeat and SOCS box protein 3">
    <location>
        <begin position="1"/>
        <end position="518"/>
    </location>
</feature>
<feature type="repeat" description="ANK 1">
    <location>
        <begin position="9"/>
        <end position="38"/>
    </location>
</feature>
<feature type="repeat" description="ANK 2">
    <location>
        <begin position="42"/>
        <end position="71"/>
    </location>
</feature>
<feature type="repeat" description="ANK 3">
    <location>
        <begin position="78"/>
        <end position="107"/>
    </location>
</feature>
<feature type="repeat" description="ANK 4">
    <location>
        <begin position="111"/>
        <end position="140"/>
    </location>
</feature>
<feature type="repeat" description="ANK 5">
    <location>
        <begin position="145"/>
        <end position="174"/>
    </location>
</feature>
<feature type="repeat" description="ANK 6">
    <location>
        <begin position="178"/>
        <end position="207"/>
    </location>
</feature>
<feature type="repeat" description="ANK 7">
    <location>
        <begin position="211"/>
        <end position="240"/>
    </location>
</feature>
<feature type="repeat" description="ANK 8">
    <location>
        <begin position="246"/>
        <end position="275"/>
    </location>
</feature>
<feature type="repeat" description="ANK 9">
    <location>
        <begin position="279"/>
        <end position="308"/>
    </location>
</feature>
<feature type="repeat" description="ANK 10">
    <location>
        <begin position="315"/>
        <end position="346"/>
    </location>
</feature>
<feature type="repeat" description="ANK 11">
    <location>
        <begin position="348"/>
        <end position="373"/>
    </location>
</feature>
<feature type="domain" description="SOCS box" evidence="2">
    <location>
        <begin position="441"/>
        <end position="504"/>
    </location>
</feature>
<feature type="splice variant" id="VSP_036392" description="In isoform 2." evidence="6">
    <location>
        <begin position="1"/>
        <end position="73"/>
    </location>
</feature>
<feature type="splice variant" id="VSP_044606" description="In isoform 3." evidence="7">
    <original>M</original>
    <variation>MAMMPLVLHHPERQAELGSGLRDGGGAALRPPGRLVKQM</variation>
    <location>
        <position position="1"/>
    </location>
</feature>
<feature type="sequence conflict" description="In Ref. 2; BAA91599." evidence="8" ref="2">
    <original>L</original>
    <variation>S</variation>
    <location>
        <position position="118"/>
    </location>
</feature>
<comment type="function">
    <text evidence="3 4 5">Probable substrate-recognition component of a SCF-like ECS (Elongin-Cullin-SOCS-box protein) E3 ubiquitin-protein ligase complex which mediates the ubiquitination and subsequent proteasomal degradation of target proteins. Recognizes TNFRSF1B (PubMed:15899873). Plays a role in the down-regulation of antiviral innate immunity by targeting MAVS for ubiquitin-proteasomal degradation (PubMed:39266719). Also destabilizes TRAF6 by enhancing its 'Lys-48'-linked polyubiquitination (PubMed:39162488).</text>
</comment>
<comment type="pathway">
    <text>Protein modification; protein ubiquitination.</text>
</comment>
<comment type="subunit">
    <text evidence="3">Interacts with ELOB and TNFRSF1B.</text>
</comment>
<comment type="interaction">
    <interactant intactId="EBI-2875625">
        <id>Q9Y575</id>
    </interactant>
    <interactant intactId="EBI-490630">
        <id>Q9NP31</id>
        <label>SH2D2A</label>
    </interactant>
    <organismsDiffer>false</organismsDiffer>
    <experiments>3</experiments>
</comment>
<comment type="interaction">
    <interactant intactId="EBI-2875625">
        <id>Q9Y575</id>
    </interactant>
    <interactant intactId="EBI-347581">
        <id>P49842</id>
        <label>STK19</label>
    </interactant>
    <organismsDiffer>false</organismsDiffer>
    <experiments>2</experiments>
</comment>
<comment type="interaction">
    <interactant intactId="EBI-14199987">
        <id>Q9Y575-3</id>
    </interactant>
    <interactant intactId="EBI-930964">
        <id>P54253</id>
        <label>ATXN1</label>
    </interactant>
    <organismsDiffer>false</organismsDiffer>
    <experiments>6</experiments>
</comment>
<comment type="interaction">
    <interactant intactId="EBI-14199987">
        <id>Q9Y575-3</id>
    </interactant>
    <interactant intactId="EBI-946046">
        <id>P54252</id>
        <label>ATXN3</label>
    </interactant>
    <organismsDiffer>false</organismsDiffer>
    <experiments>3</experiments>
</comment>
<comment type="interaction">
    <interactant intactId="EBI-14199987">
        <id>Q9Y575-3</id>
    </interactant>
    <interactant intactId="EBI-10988864">
        <id>P46379-2</id>
        <label>BAG6</label>
    </interactant>
    <organismsDiffer>false</organismsDiffer>
    <experiments>3</experiments>
</comment>
<comment type="interaction">
    <interactant intactId="EBI-14199987">
        <id>Q9Y575-3</id>
    </interactant>
    <interactant intactId="EBI-739773">
        <id>Q9BSW2</id>
        <label>CRACR2A</label>
    </interactant>
    <organismsDiffer>false</organismsDiffer>
    <experiments>3</experiments>
</comment>
<comment type="interaction">
    <interactant intactId="EBI-14199987">
        <id>Q9Y575-3</id>
    </interactant>
    <interactant intactId="EBI-10976677">
        <id>G5E9A7</id>
        <label>DMWD</label>
    </interactant>
    <organismsDiffer>false</organismsDiffer>
    <experiments>3</experiments>
</comment>
<comment type="interaction">
    <interactant intactId="EBI-14199987">
        <id>Q9Y575-3</id>
    </interactant>
    <interactant intactId="EBI-744099">
        <id>Q9H0I2</id>
        <label>ENKD1</label>
    </interactant>
    <organismsDiffer>false</organismsDiffer>
    <experiments>3</experiments>
</comment>
<comment type="interaction">
    <interactant intactId="EBI-14199987">
        <id>Q9Y575-3</id>
    </interactant>
    <interactant intactId="EBI-744302">
        <id>P14136</id>
        <label>GFAP</label>
    </interactant>
    <organismsDiffer>false</organismsDiffer>
    <experiments>3</experiments>
</comment>
<comment type="interaction">
    <interactant intactId="EBI-14199987">
        <id>Q9Y575-3</id>
    </interactant>
    <interactant intactId="EBI-1955541">
        <id>Q53GS7</id>
        <label>GLE1</label>
    </interactant>
    <organismsDiffer>false</organismsDiffer>
    <experiments>3</experiments>
</comment>
<comment type="interaction">
    <interactant intactId="EBI-14199987">
        <id>Q9Y575-3</id>
    </interactant>
    <interactant intactId="EBI-747754">
        <id>P28799</id>
        <label>GRN</label>
    </interactant>
    <organismsDiffer>false</organismsDiffer>
    <experiments>3</experiments>
</comment>
<comment type="interaction">
    <interactant intactId="EBI-14199987">
        <id>Q9Y575-3</id>
    </interactant>
    <interactant intactId="EBI-7133736">
        <id>P07686</id>
        <label>HEXB</label>
    </interactant>
    <organismsDiffer>false</organismsDiffer>
    <experiments>3</experiments>
</comment>
<comment type="interaction">
    <interactant intactId="EBI-14199987">
        <id>Q9Y575-3</id>
    </interactant>
    <interactant intactId="EBI-352682">
        <id>P04792</id>
        <label>HSPB1</label>
    </interactant>
    <organismsDiffer>false</organismsDiffer>
    <experiments>3</experiments>
</comment>
<comment type="interaction">
    <interactant intactId="EBI-14199987">
        <id>Q9Y575-3</id>
    </interactant>
    <interactant intactId="EBI-517086">
        <id>O43464</id>
        <label>HTRA2</label>
    </interactant>
    <organismsDiffer>false</organismsDiffer>
    <experiments>3</experiments>
</comment>
<comment type="interaction">
    <interactant intactId="EBI-14199987">
        <id>Q9Y575-3</id>
    </interactant>
    <interactant intactId="EBI-466029">
        <id>P42858</id>
        <label>HTT</label>
    </interactant>
    <organismsDiffer>false</organismsDiffer>
    <experiments>6</experiments>
</comment>
<comment type="interaction">
    <interactant intactId="EBI-14199987">
        <id>Q9Y575-3</id>
    </interactant>
    <interactant intactId="EBI-1055254">
        <id>Q8WXH2</id>
        <label>JPH3</label>
    </interactant>
    <organismsDiffer>false</organismsDiffer>
    <experiments>3</experiments>
</comment>
<comment type="interaction">
    <interactant intactId="EBI-14199987">
        <id>Q9Y575-3</id>
    </interactant>
    <interactant intactId="EBI-10975473">
        <id>O60333-2</id>
        <label>KIF1B</label>
    </interactant>
    <organismsDiffer>false</organismsDiffer>
    <experiments>3</experiments>
</comment>
<comment type="interaction">
    <interactant intactId="EBI-14199987">
        <id>Q9Y575-3</id>
    </interactant>
    <interactant intactId="EBI-948266">
        <id>O14901</id>
        <label>KLF11</label>
    </interactant>
    <organismsDiffer>false</organismsDiffer>
    <experiments>3</experiments>
</comment>
<comment type="interaction">
    <interactant intactId="EBI-14199987">
        <id>Q9Y575-3</id>
    </interactant>
    <interactant intactId="EBI-1189067">
        <id>P51608</id>
        <label>MECP2</label>
    </interactant>
    <organismsDiffer>false</organismsDiffer>
    <experiments>3</experiments>
</comment>
<comment type="interaction">
    <interactant intactId="EBI-14199987">
        <id>Q9Y575-3</id>
    </interactant>
    <interactant intactId="EBI-713665">
        <id>P19404</id>
        <label>NDUFV2</label>
    </interactant>
    <organismsDiffer>false</organismsDiffer>
    <experiments>3</experiments>
</comment>
<comment type="interaction">
    <interactant intactId="EBI-14199987">
        <id>Q9Y575-3</id>
    </interactant>
    <interactant intactId="EBI-475646">
        <id>P07196</id>
        <label>NEFL</label>
    </interactant>
    <organismsDiffer>false</organismsDiffer>
    <experiments>3</experiments>
</comment>
<comment type="interaction">
    <interactant intactId="EBI-14199987">
        <id>Q9Y575-3</id>
    </interactant>
    <interactant intactId="EBI-1391623">
        <id>P29474</id>
        <label>NOS3</label>
    </interactant>
    <organismsDiffer>false</organismsDiffer>
    <experiments>3</experiments>
</comment>
<comment type="interaction">
    <interactant intactId="EBI-14199987">
        <id>Q9Y575-3</id>
    </interactant>
    <interactant intactId="EBI-1237011">
        <id>P50897</id>
        <label>PPT1</label>
    </interactant>
    <organismsDiffer>false</organismsDiffer>
    <experiments>3</experiments>
</comment>
<comment type="interaction">
    <interactant intactId="EBI-14199987">
        <id>Q9Y575-3</id>
    </interactant>
    <interactant intactId="EBI-21251460">
        <id>O60260-5</id>
        <label>PRKN</label>
    </interactant>
    <organismsDiffer>false</organismsDiffer>
    <experiments>3</experiments>
</comment>
<comment type="interaction">
    <interactant intactId="EBI-14199987">
        <id>Q9Y575-3</id>
    </interactant>
    <interactant intactId="EBI-749195">
        <id>P60891</id>
        <label>PRPS1</label>
    </interactant>
    <organismsDiffer>false</organismsDiffer>
    <experiments>3</experiments>
</comment>
<comment type="interaction">
    <interactant intactId="EBI-14199987">
        <id>Q9Y575-3</id>
    </interactant>
    <interactant intactId="EBI-396669">
        <id>Q9Y3C5</id>
        <label>RNF11</label>
    </interactant>
    <organismsDiffer>false</organismsDiffer>
    <experiments>3</experiments>
</comment>
<comment type="interaction">
    <interactant intactId="EBI-14199987">
        <id>Q9Y575-3</id>
    </interactant>
    <interactant intactId="EBI-5235340">
        <id>Q7Z699</id>
        <label>SPRED1</label>
    </interactant>
    <organismsDiffer>false</organismsDiffer>
    <experiments>3</experiments>
</comment>
<comment type="interaction">
    <interactant intactId="EBI-14199987">
        <id>Q9Y575-3</id>
    </interactant>
    <interactant intactId="EBI-372899">
        <id>Q13148</id>
        <label>TARDBP</label>
    </interactant>
    <organismsDiffer>false</organismsDiffer>
    <experiments>3</experiments>
</comment>
<comment type="interaction">
    <interactant intactId="EBI-14199987">
        <id>Q9Y575-3</id>
    </interactant>
    <interactant intactId="EBI-11139477">
        <id>Q96N21</id>
        <label>TEPSIN</label>
    </interactant>
    <organismsDiffer>false</organismsDiffer>
    <experiments>3</experiments>
</comment>
<comment type="interaction">
    <interactant intactId="EBI-14199987">
        <id>Q9Y575-3</id>
    </interactant>
    <interactant intactId="EBI-11741437">
        <id>Q08117-2</id>
        <label>TLE5</label>
    </interactant>
    <organismsDiffer>false</organismsDiffer>
    <experiments>3</experiments>
</comment>
<comment type="interaction">
    <interactant intactId="EBI-14199987">
        <id>Q9Y575-3</id>
    </interactant>
    <interactant intactId="EBI-711909">
        <id>P02766</id>
        <label>TTR</label>
    </interactant>
    <organismsDiffer>false</organismsDiffer>
    <experiments>3</experiments>
</comment>
<comment type="interaction">
    <interactant intactId="EBI-14199987">
        <id>Q9Y575-3</id>
    </interactant>
    <interactant intactId="EBI-12157263">
        <id>P40337-2</id>
        <label>VHL</label>
    </interactant>
    <organismsDiffer>false</organismsDiffer>
    <experiments>3</experiments>
</comment>
<comment type="interaction">
    <interactant intactId="EBI-14199987">
        <id>Q9Y575-3</id>
    </interactant>
    <interactant intactId="EBI-720609">
        <id>O76024</id>
        <label>WFS1</label>
    </interactant>
    <organismsDiffer>false</organismsDiffer>
    <experiments>3</experiments>
</comment>
<comment type="subcellular location">
    <subcellularLocation>
        <location evidence="4 5">Cytoplasm</location>
    </subcellularLocation>
</comment>
<comment type="alternative products">
    <event type="alternative splicing"/>
    <isoform>
        <id>Q9Y575-1</id>
        <name>1</name>
        <sequence type="displayed"/>
    </isoform>
    <isoform>
        <id>Q9Y575-2</id>
        <name>2</name>
        <sequence type="described" ref="VSP_036392"/>
    </isoform>
    <isoform>
        <id>Q9Y575-3</id>
        <name>3</name>
        <sequence type="described" ref="VSP_044606"/>
    </isoform>
</comment>
<comment type="induction">
    <text evidence="5">Upon sendai virus infection.</text>
</comment>
<comment type="domain">
    <text evidence="1">The SOCS box domain mediates the interaction with the Elongin BC complex, an adapter module in different E3 ubiquitin-protein ligase complexes.</text>
</comment>
<comment type="similarity">
    <text evidence="8">Belongs to the ankyrin SOCS box (ASB) family.</text>
</comment>
<comment type="sequence caution" evidence="8">
    <conflict type="erroneous initiation">
        <sequence resource="EMBL-CDS" id="AAI10916"/>
    </conflict>
    <text>Truncated N-terminus.</text>
</comment>
<reference key="1">
    <citation type="journal article" date="2000" name="Gene">
        <title>Cloning and characterization of the genes encoding the ankyrin repeat and SOCS box-containing proteins Asb-1, Asb-2, Asb-3 and Asb-4.</title>
        <authorList>
            <person name="Kile B.T."/>
            <person name="Viney E.M."/>
            <person name="Willson T.A."/>
            <person name="Brodnicki T.C."/>
            <person name="Cancilla M.R."/>
            <person name="Herlihy A.S."/>
            <person name="Croker B.A."/>
            <person name="Baca M."/>
            <person name="Nicola N.A."/>
            <person name="Hilton D.J."/>
            <person name="Alexander W.S."/>
        </authorList>
    </citation>
    <scope>NUCLEOTIDE SEQUENCE [MRNA] (ISOFORM 1)</scope>
</reference>
<reference key="2">
    <citation type="journal article" date="2004" name="Nat. Genet.">
        <title>Complete sequencing and characterization of 21,243 full-length human cDNAs.</title>
        <authorList>
            <person name="Ota T."/>
            <person name="Suzuki Y."/>
            <person name="Nishikawa T."/>
            <person name="Otsuki T."/>
            <person name="Sugiyama T."/>
            <person name="Irie R."/>
            <person name="Wakamatsu A."/>
            <person name="Hayashi K."/>
            <person name="Sato H."/>
            <person name="Nagai K."/>
            <person name="Kimura K."/>
            <person name="Makita H."/>
            <person name="Sekine M."/>
            <person name="Obayashi M."/>
            <person name="Nishi T."/>
            <person name="Shibahara T."/>
            <person name="Tanaka T."/>
            <person name="Ishii S."/>
            <person name="Yamamoto J."/>
            <person name="Saito K."/>
            <person name="Kawai Y."/>
            <person name="Isono Y."/>
            <person name="Nakamura Y."/>
            <person name="Nagahari K."/>
            <person name="Murakami K."/>
            <person name="Yasuda T."/>
            <person name="Iwayanagi T."/>
            <person name="Wagatsuma M."/>
            <person name="Shiratori A."/>
            <person name="Sudo H."/>
            <person name="Hosoiri T."/>
            <person name="Kaku Y."/>
            <person name="Kodaira H."/>
            <person name="Kondo H."/>
            <person name="Sugawara M."/>
            <person name="Takahashi M."/>
            <person name="Kanda K."/>
            <person name="Yokoi T."/>
            <person name="Furuya T."/>
            <person name="Kikkawa E."/>
            <person name="Omura Y."/>
            <person name="Abe K."/>
            <person name="Kamihara K."/>
            <person name="Katsuta N."/>
            <person name="Sato K."/>
            <person name="Tanikawa M."/>
            <person name="Yamazaki M."/>
            <person name="Ninomiya K."/>
            <person name="Ishibashi T."/>
            <person name="Yamashita H."/>
            <person name="Murakawa K."/>
            <person name="Fujimori K."/>
            <person name="Tanai H."/>
            <person name="Kimata M."/>
            <person name="Watanabe M."/>
            <person name="Hiraoka S."/>
            <person name="Chiba Y."/>
            <person name="Ishida S."/>
            <person name="Ono Y."/>
            <person name="Takiguchi S."/>
            <person name="Watanabe S."/>
            <person name="Yosida M."/>
            <person name="Hotuta T."/>
            <person name="Kusano J."/>
            <person name="Kanehori K."/>
            <person name="Takahashi-Fujii A."/>
            <person name="Hara H."/>
            <person name="Tanase T.-O."/>
            <person name="Nomura Y."/>
            <person name="Togiya S."/>
            <person name="Komai F."/>
            <person name="Hara R."/>
            <person name="Takeuchi K."/>
            <person name="Arita M."/>
            <person name="Imose N."/>
            <person name="Musashino K."/>
            <person name="Yuuki H."/>
            <person name="Oshima A."/>
            <person name="Sasaki N."/>
            <person name="Aotsuka S."/>
            <person name="Yoshikawa Y."/>
            <person name="Matsunawa H."/>
            <person name="Ichihara T."/>
            <person name="Shiohata N."/>
            <person name="Sano S."/>
            <person name="Moriya S."/>
            <person name="Momiyama H."/>
            <person name="Satoh N."/>
            <person name="Takami S."/>
            <person name="Terashima Y."/>
            <person name="Suzuki O."/>
            <person name="Nakagawa S."/>
            <person name="Senoh A."/>
            <person name="Mizoguchi H."/>
            <person name="Goto Y."/>
            <person name="Shimizu F."/>
            <person name="Wakebe H."/>
            <person name="Hishigaki H."/>
            <person name="Watanabe T."/>
            <person name="Sugiyama A."/>
            <person name="Takemoto M."/>
            <person name="Kawakami B."/>
            <person name="Yamazaki M."/>
            <person name="Watanabe K."/>
            <person name="Kumagai A."/>
            <person name="Itakura S."/>
            <person name="Fukuzumi Y."/>
            <person name="Fujimori Y."/>
            <person name="Komiyama M."/>
            <person name="Tashiro H."/>
            <person name="Tanigami A."/>
            <person name="Fujiwara T."/>
            <person name="Ono T."/>
            <person name="Yamada K."/>
            <person name="Fujii Y."/>
            <person name="Ozaki K."/>
            <person name="Hirao M."/>
            <person name="Ohmori Y."/>
            <person name="Kawabata A."/>
            <person name="Hikiji T."/>
            <person name="Kobatake N."/>
            <person name="Inagaki H."/>
            <person name="Ikema Y."/>
            <person name="Okamoto S."/>
            <person name="Okitani R."/>
            <person name="Kawakami T."/>
            <person name="Noguchi S."/>
            <person name="Itoh T."/>
            <person name="Shigeta K."/>
            <person name="Senba T."/>
            <person name="Matsumura K."/>
            <person name="Nakajima Y."/>
            <person name="Mizuno T."/>
            <person name="Morinaga M."/>
            <person name="Sasaki M."/>
            <person name="Togashi T."/>
            <person name="Oyama M."/>
            <person name="Hata H."/>
            <person name="Watanabe M."/>
            <person name="Komatsu T."/>
            <person name="Mizushima-Sugano J."/>
            <person name="Satoh T."/>
            <person name="Shirai Y."/>
            <person name="Takahashi Y."/>
            <person name="Nakagawa K."/>
            <person name="Okumura K."/>
            <person name="Nagase T."/>
            <person name="Nomura N."/>
            <person name="Kikuchi H."/>
            <person name="Masuho Y."/>
            <person name="Yamashita R."/>
            <person name="Nakai K."/>
            <person name="Yada T."/>
            <person name="Nakamura Y."/>
            <person name="Ohara O."/>
            <person name="Isogai T."/>
            <person name="Sugano S."/>
        </authorList>
    </citation>
    <scope>NUCLEOTIDE SEQUENCE [LARGE SCALE MRNA] (ISOFORMS 1 AND 2)</scope>
    <source>
        <tissue>Embryo</tissue>
        <tissue>Teratocarcinoma</tissue>
    </source>
</reference>
<reference key="3">
    <citation type="journal article" date="2005" name="Nature">
        <title>Generation and annotation of the DNA sequences of human chromosomes 2 and 4.</title>
        <authorList>
            <person name="Hillier L.W."/>
            <person name="Graves T.A."/>
            <person name="Fulton R.S."/>
            <person name="Fulton L.A."/>
            <person name="Pepin K.H."/>
            <person name="Minx P."/>
            <person name="Wagner-McPherson C."/>
            <person name="Layman D."/>
            <person name="Wylie K."/>
            <person name="Sekhon M."/>
            <person name="Becker M.C."/>
            <person name="Fewell G.A."/>
            <person name="Delehaunty K.D."/>
            <person name="Miner T.L."/>
            <person name="Nash W.E."/>
            <person name="Kremitzki C."/>
            <person name="Oddy L."/>
            <person name="Du H."/>
            <person name="Sun H."/>
            <person name="Bradshaw-Cordum H."/>
            <person name="Ali J."/>
            <person name="Carter J."/>
            <person name="Cordes M."/>
            <person name="Harris A."/>
            <person name="Isak A."/>
            <person name="van Brunt A."/>
            <person name="Nguyen C."/>
            <person name="Du F."/>
            <person name="Courtney L."/>
            <person name="Kalicki J."/>
            <person name="Ozersky P."/>
            <person name="Abbott S."/>
            <person name="Armstrong J."/>
            <person name="Belter E.A."/>
            <person name="Caruso L."/>
            <person name="Cedroni M."/>
            <person name="Cotton M."/>
            <person name="Davidson T."/>
            <person name="Desai A."/>
            <person name="Elliott G."/>
            <person name="Erb T."/>
            <person name="Fronick C."/>
            <person name="Gaige T."/>
            <person name="Haakenson W."/>
            <person name="Haglund K."/>
            <person name="Holmes A."/>
            <person name="Harkins R."/>
            <person name="Kim K."/>
            <person name="Kruchowski S.S."/>
            <person name="Strong C.M."/>
            <person name="Grewal N."/>
            <person name="Goyea E."/>
            <person name="Hou S."/>
            <person name="Levy A."/>
            <person name="Martinka S."/>
            <person name="Mead K."/>
            <person name="McLellan M.D."/>
            <person name="Meyer R."/>
            <person name="Randall-Maher J."/>
            <person name="Tomlinson C."/>
            <person name="Dauphin-Kohlberg S."/>
            <person name="Kozlowicz-Reilly A."/>
            <person name="Shah N."/>
            <person name="Swearengen-Shahid S."/>
            <person name="Snider J."/>
            <person name="Strong J.T."/>
            <person name="Thompson J."/>
            <person name="Yoakum M."/>
            <person name="Leonard S."/>
            <person name="Pearman C."/>
            <person name="Trani L."/>
            <person name="Radionenko M."/>
            <person name="Waligorski J.E."/>
            <person name="Wang C."/>
            <person name="Rock S.M."/>
            <person name="Tin-Wollam A.-M."/>
            <person name="Maupin R."/>
            <person name="Latreille P."/>
            <person name="Wendl M.C."/>
            <person name="Yang S.-P."/>
            <person name="Pohl C."/>
            <person name="Wallis J.W."/>
            <person name="Spieth J."/>
            <person name="Bieri T.A."/>
            <person name="Berkowicz N."/>
            <person name="Nelson J.O."/>
            <person name="Osborne J."/>
            <person name="Ding L."/>
            <person name="Meyer R."/>
            <person name="Sabo A."/>
            <person name="Shotland Y."/>
            <person name="Sinha P."/>
            <person name="Wohldmann P.E."/>
            <person name="Cook L.L."/>
            <person name="Hickenbotham M.T."/>
            <person name="Eldred J."/>
            <person name="Williams D."/>
            <person name="Jones T.A."/>
            <person name="She X."/>
            <person name="Ciccarelli F.D."/>
            <person name="Izaurralde E."/>
            <person name="Taylor J."/>
            <person name="Schmutz J."/>
            <person name="Myers R.M."/>
            <person name="Cox D.R."/>
            <person name="Huang X."/>
            <person name="McPherson J.D."/>
            <person name="Mardis E.R."/>
            <person name="Clifton S.W."/>
            <person name="Warren W.C."/>
            <person name="Chinwalla A.T."/>
            <person name="Eddy S.R."/>
            <person name="Marra M.A."/>
            <person name="Ovcharenko I."/>
            <person name="Furey T.S."/>
            <person name="Miller W."/>
            <person name="Eichler E.E."/>
            <person name="Bork P."/>
            <person name="Suyama M."/>
            <person name="Torrents D."/>
            <person name="Waterston R.H."/>
            <person name="Wilson R.K."/>
        </authorList>
    </citation>
    <scope>NUCLEOTIDE SEQUENCE [LARGE SCALE GENOMIC DNA]</scope>
</reference>
<reference key="4">
    <citation type="submission" date="2005-09" db="EMBL/GenBank/DDBJ databases">
        <authorList>
            <person name="Mural R.J."/>
            <person name="Istrail S."/>
            <person name="Sutton G.G."/>
            <person name="Florea L."/>
            <person name="Halpern A.L."/>
            <person name="Mobarry C.M."/>
            <person name="Lippert R."/>
            <person name="Walenz B."/>
            <person name="Shatkay H."/>
            <person name="Dew I."/>
            <person name="Miller J.R."/>
            <person name="Flanigan M.J."/>
            <person name="Edwards N.J."/>
            <person name="Bolanos R."/>
            <person name="Fasulo D."/>
            <person name="Halldorsson B.V."/>
            <person name="Hannenhalli S."/>
            <person name="Turner R."/>
            <person name="Yooseph S."/>
            <person name="Lu F."/>
            <person name="Nusskern D.R."/>
            <person name="Shue B.C."/>
            <person name="Zheng X.H."/>
            <person name="Zhong F."/>
            <person name="Delcher A.L."/>
            <person name="Huson D.H."/>
            <person name="Kravitz S.A."/>
            <person name="Mouchard L."/>
            <person name="Reinert K."/>
            <person name="Remington K.A."/>
            <person name="Clark A.G."/>
            <person name="Waterman M.S."/>
            <person name="Eichler E.E."/>
            <person name="Adams M.D."/>
            <person name="Hunkapiller M.W."/>
            <person name="Myers E.W."/>
            <person name="Venter J.C."/>
        </authorList>
    </citation>
    <scope>NUCLEOTIDE SEQUENCE [LARGE SCALE GENOMIC DNA]</scope>
</reference>
<reference key="5">
    <citation type="journal article" date="2004" name="Genome Res.">
        <title>The status, quality, and expansion of the NIH full-length cDNA project: the Mammalian Gene Collection (MGC).</title>
        <authorList>
            <consortium name="The MGC Project Team"/>
        </authorList>
    </citation>
    <scope>NUCLEOTIDE SEQUENCE [LARGE SCALE MRNA] (ISOFORMS 1 AND 3)</scope>
    <source>
        <tissue>Brain</tissue>
        <tissue>Kidney</tissue>
        <tissue>Lung</tissue>
    </source>
</reference>
<reference key="6">
    <citation type="journal article" date="2005" name="Mol. Cell. Biol.">
        <title>Ankyrin repeat and SOCS box 3 (ASB3) mediates ubiquitination and degradation of tumor necrosis factor receptor II.</title>
        <authorList>
            <person name="Chung A.S."/>
            <person name="Guan Y.J."/>
            <person name="Yuan Z.L."/>
            <person name="Albina J.E."/>
            <person name="Chin Y.E."/>
        </authorList>
    </citation>
    <scope>FUNCTION</scope>
    <scope>INTERACTION WITH ELOB AND TNFRSF1B</scope>
</reference>
<reference key="7">
    <citation type="journal article" date="2024" name="MBio">
        <title>ASB3 expression aggravates inflammatory bowel disease by targeting TRAF6 protein stability and affecting the intestinal microbiota.</title>
        <authorList>
            <person name="Cheng M."/>
            <person name="Xu B."/>
            <person name="Sun Y."/>
            <person name="Wang J."/>
            <person name="Lu Y."/>
            <person name="Shi C."/>
            <person name="Pan T."/>
            <person name="Zhao W."/>
            <person name="Li X."/>
            <person name="Song X."/>
            <person name="Wang J."/>
            <person name="Wang N."/>
            <person name="Yang W."/>
            <person name="Jiang Y."/>
            <person name="Huang H."/>
            <person name="Yang G."/>
            <person name="Zeng Y."/>
            <person name="Yang D."/>
            <person name="Wang C."/>
            <person name="Cao X."/>
        </authorList>
    </citation>
    <scope>FUNCTION</scope>
    <scope>SUBCELLULAR LOCATION</scope>
</reference>
<reference key="8">
    <citation type="journal article" date="2024" name="Cell Death Differ.">
        <title>The E3 ligase ASB3 downregulates antiviral innate immunity by targeting MAVS for ubiquitin-proteasomal degradation.</title>
        <authorList>
            <person name="Cheng M."/>
            <person name="Lu Y."/>
            <person name="Wang J."/>
            <person name="Wang H."/>
            <person name="Sun Y."/>
            <person name="Zhao W."/>
            <person name="Wang J."/>
            <person name="Shi C."/>
            <person name="Luo J."/>
            <person name="Gao M."/>
            <person name="Yu T."/>
            <person name="Wang J."/>
            <person name="Guan J."/>
            <person name="Wang N."/>
            <person name="Yang W."/>
            <person name="Jiang Y."/>
            <person name="Huang H."/>
            <person name="Yang G."/>
            <person name="Cao X."/>
            <person name="Yang D."/>
            <person name="Wang C."/>
            <person name="Zeng Y."/>
        </authorList>
    </citation>
    <scope>FUNCTION</scope>
    <scope>SUBCELLULAR LOCATION</scope>
    <scope>INDUCTION BY SENDAI VIRUS</scope>
</reference>
<keyword id="KW-0025">Alternative splicing</keyword>
<keyword id="KW-0040">ANK repeat</keyword>
<keyword id="KW-0963">Cytoplasm</keyword>
<keyword id="KW-1267">Proteomics identification</keyword>
<keyword id="KW-1185">Reference proteome</keyword>
<keyword id="KW-0677">Repeat</keyword>
<keyword id="KW-0833">Ubl conjugation pathway</keyword>